<reference key="1">
    <citation type="journal article" date="2010" name="Genome Biol. Evol.">
        <title>Continuing evolution of Burkholderia mallei through genome reduction and large-scale rearrangements.</title>
        <authorList>
            <person name="Losada L."/>
            <person name="Ronning C.M."/>
            <person name="DeShazer D."/>
            <person name="Woods D."/>
            <person name="Fedorova N."/>
            <person name="Kim H.S."/>
            <person name="Shabalina S.A."/>
            <person name="Pearson T.R."/>
            <person name="Brinkac L."/>
            <person name="Tan P."/>
            <person name="Nandi T."/>
            <person name="Crabtree J."/>
            <person name="Badger J."/>
            <person name="Beckstrom-Sternberg S."/>
            <person name="Saqib M."/>
            <person name="Schutzer S.E."/>
            <person name="Keim P."/>
            <person name="Nierman W.C."/>
        </authorList>
    </citation>
    <scope>NUCLEOTIDE SEQUENCE [LARGE SCALE GENOMIC DNA]</scope>
    <source>
        <strain>NCTC 10247</strain>
    </source>
</reference>
<evidence type="ECO:0000255" key="1">
    <source>
        <dbReference type="HAMAP-Rule" id="MF_01376"/>
    </source>
</evidence>
<dbReference type="EC" id="2.6.1.37" evidence="1"/>
<dbReference type="EMBL" id="CP000547">
    <property type="protein sequence ID" value="ABO01567.1"/>
    <property type="molecule type" value="Genomic_DNA"/>
</dbReference>
<dbReference type="RefSeq" id="WP_004194610.1">
    <property type="nucleotide sequence ID" value="NZ_CP007801.1"/>
</dbReference>
<dbReference type="SMR" id="A3MCV7"/>
<dbReference type="KEGG" id="bmaz:BM44_4878"/>
<dbReference type="KEGG" id="bmn:BMA10247_A0895"/>
<dbReference type="PATRIC" id="fig|320389.8.peg.5592"/>
<dbReference type="GO" id="GO:0047304">
    <property type="term" value="F:2-aminoethylphosphonate-pyruvate transaminase activity"/>
    <property type="evidence" value="ECO:0007669"/>
    <property type="project" value="UniProtKB-UniRule"/>
</dbReference>
<dbReference type="GO" id="GO:0019700">
    <property type="term" value="P:organic phosphonate catabolic process"/>
    <property type="evidence" value="ECO:0007669"/>
    <property type="project" value="InterPro"/>
</dbReference>
<dbReference type="Gene3D" id="3.90.1150.10">
    <property type="entry name" value="Aspartate Aminotransferase, domain 1"/>
    <property type="match status" value="1"/>
</dbReference>
<dbReference type="Gene3D" id="3.40.640.10">
    <property type="entry name" value="Type I PLP-dependent aspartate aminotransferase-like (Major domain)"/>
    <property type="match status" value="1"/>
</dbReference>
<dbReference type="HAMAP" id="MF_01376">
    <property type="entry name" value="PhnW_aminotrans_5"/>
    <property type="match status" value="1"/>
</dbReference>
<dbReference type="InterPro" id="IPR000192">
    <property type="entry name" value="Aminotrans_V_dom"/>
</dbReference>
<dbReference type="InterPro" id="IPR012703">
    <property type="entry name" value="NH2EtPonate_pyrv_transaminase"/>
</dbReference>
<dbReference type="InterPro" id="IPR015424">
    <property type="entry name" value="PyrdxlP-dep_Trfase"/>
</dbReference>
<dbReference type="InterPro" id="IPR015421">
    <property type="entry name" value="PyrdxlP-dep_Trfase_major"/>
</dbReference>
<dbReference type="InterPro" id="IPR015422">
    <property type="entry name" value="PyrdxlP-dep_Trfase_small"/>
</dbReference>
<dbReference type="InterPro" id="IPR024169">
    <property type="entry name" value="SP_NH2Trfase/AEP_transaminase"/>
</dbReference>
<dbReference type="NCBIfam" id="TIGR03301">
    <property type="entry name" value="PhnW-AepZ"/>
    <property type="match status" value="1"/>
</dbReference>
<dbReference type="NCBIfam" id="NF010006">
    <property type="entry name" value="PRK13479.1"/>
    <property type="match status" value="1"/>
</dbReference>
<dbReference type="NCBIfam" id="TIGR02326">
    <property type="entry name" value="transamin_PhnW"/>
    <property type="match status" value="1"/>
</dbReference>
<dbReference type="PANTHER" id="PTHR42778">
    <property type="entry name" value="2-AMINOETHYLPHOSPHONATE--PYRUVATE TRANSAMINASE"/>
    <property type="match status" value="1"/>
</dbReference>
<dbReference type="PANTHER" id="PTHR42778:SF1">
    <property type="entry name" value="2-AMINOETHYLPHOSPHONATE--PYRUVATE TRANSAMINASE"/>
    <property type="match status" value="1"/>
</dbReference>
<dbReference type="Pfam" id="PF00266">
    <property type="entry name" value="Aminotran_5"/>
    <property type="match status" value="1"/>
</dbReference>
<dbReference type="PIRSF" id="PIRSF000524">
    <property type="entry name" value="SPT"/>
    <property type="match status" value="1"/>
</dbReference>
<dbReference type="SUPFAM" id="SSF53383">
    <property type="entry name" value="PLP-dependent transferases"/>
    <property type="match status" value="1"/>
</dbReference>
<proteinExistence type="inferred from homology"/>
<organism>
    <name type="scientific">Burkholderia mallei (strain NCTC 10247)</name>
    <dbReference type="NCBI Taxonomy" id="320389"/>
    <lineage>
        <taxon>Bacteria</taxon>
        <taxon>Pseudomonadati</taxon>
        <taxon>Pseudomonadota</taxon>
        <taxon>Betaproteobacteria</taxon>
        <taxon>Burkholderiales</taxon>
        <taxon>Burkholderiaceae</taxon>
        <taxon>Burkholderia</taxon>
        <taxon>pseudomallei group</taxon>
    </lineage>
</organism>
<feature type="chain" id="PRO_1000068243" description="2-aminoethylphosphonate--pyruvate transaminase">
    <location>
        <begin position="1"/>
        <end position="369"/>
    </location>
</feature>
<feature type="modified residue" description="N6-(pyridoxal phosphate)lysine" evidence="1">
    <location>
        <position position="193"/>
    </location>
</feature>
<protein>
    <recommendedName>
        <fullName evidence="1">2-aminoethylphosphonate--pyruvate transaminase</fullName>
        <ecNumber evidence="1">2.6.1.37</ecNumber>
    </recommendedName>
    <alternativeName>
        <fullName evidence="1">2-aminoethylphosphonate aminotransferase</fullName>
    </alternativeName>
    <alternativeName>
        <fullName evidence="1">AEP transaminase</fullName>
        <shortName evidence="1">AEPT</shortName>
    </alternativeName>
</protein>
<comment type="function">
    <text evidence="1">Involved in phosphonate degradation.</text>
</comment>
<comment type="catalytic activity">
    <reaction evidence="1">
        <text>(2-aminoethyl)phosphonate + pyruvate = phosphonoacetaldehyde + L-alanine</text>
        <dbReference type="Rhea" id="RHEA:17021"/>
        <dbReference type="ChEBI" id="CHEBI:15361"/>
        <dbReference type="ChEBI" id="CHEBI:57418"/>
        <dbReference type="ChEBI" id="CHEBI:57972"/>
        <dbReference type="ChEBI" id="CHEBI:58383"/>
        <dbReference type="EC" id="2.6.1.37"/>
    </reaction>
</comment>
<comment type="cofactor">
    <cofactor evidence="1">
        <name>pyridoxal 5'-phosphate</name>
        <dbReference type="ChEBI" id="CHEBI:597326"/>
    </cofactor>
</comment>
<comment type="subunit">
    <text evidence="1">Homodimer.</text>
</comment>
<comment type="similarity">
    <text evidence="1">Belongs to the class-V pyridoxal-phosphate-dependent aminotransferase family. PhnW subfamily.</text>
</comment>
<accession>A3MCV7</accession>
<name>PHNW_BURM7</name>
<sequence length="369" mass="38859">MPERDPILLTPGPLTTSRMTRDAMLRDWGSWDAAFNRLTKSVCADLVRIAGGGDAYVCVPLQGSGTFAVEATLGTLVPRDARVLVPNNGAYCARIAAILRRLGIAHVELPFAEDEPASAHAIDAALARDARLTHVALVHLETSAGLLNPLDDIAAVCRARGRALIVDAMSSFGALPIALAASGIDALISASGKCLEGVPGMGFAIVRRSALEAAEGRSPSVALDLHDQYAYMQRTSQWRFTPPTHVLAALRAALDQFFDEGGQPARGARYARNCATLVDGMRALGFEPFLDARAQASVIVTFYAPADPAYAFPAFYAAVRDAGYVLYPGKLTTADTFRVGCIGALGADEMRGAVAAIGGALESLGIAMR</sequence>
<keyword id="KW-0032">Aminotransferase</keyword>
<keyword id="KW-0663">Pyridoxal phosphate</keyword>
<keyword id="KW-0670">Pyruvate</keyword>
<keyword id="KW-0808">Transferase</keyword>
<gene>
    <name evidence="1" type="primary">phnW</name>
    <name type="ordered locus">BMA10247_A0895</name>
</gene>